<proteinExistence type="evidence at transcript level"/>
<organism>
    <name type="scientific">Mus musculus</name>
    <name type="common">Mouse</name>
    <dbReference type="NCBI Taxonomy" id="10090"/>
    <lineage>
        <taxon>Eukaryota</taxon>
        <taxon>Metazoa</taxon>
        <taxon>Chordata</taxon>
        <taxon>Craniata</taxon>
        <taxon>Vertebrata</taxon>
        <taxon>Euteleostomi</taxon>
        <taxon>Mammalia</taxon>
        <taxon>Eutheria</taxon>
        <taxon>Euarchontoglires</taxon>
        <taxon>Glires</taxon>
        <taxon>Rodentia</taxon>
        <taxon>Myomorpha</taxon>
        <taxon>Muroidea</taxon>
        <taxon>Muridae</taxon>
        <taxon>Murinae</taxon>
        <taxon>Mus</taxon>
        <taxon>Mus</taxon>
    </lineage>
</organism>
<accession>Q66JV4</accession>
<accession>A2AJP4</accession>
<accession>Q3TE05</accession>
<accession>Q8BNP2</accession>
<accession>Q8K0T9</accession>
<keyword id="KW-0025">Alternative splicing</keyword>
<keyword id="KW-0597">Phosphoprotein</keyword>
<keyword id="KW-1185">Reference proteome</keyword>
<keyword id="KW-0677">Repeat</keyword>
<keyword id="KW-0694">RNA-binding</keyword>
<gene>
    <name type="primary">Rbm12b2</name>
    <name type="synonym">Rbm12bb</name>
</gene>
<feature type="chain" id="PRO_0000273369" description="RNA-binding protein 12B-B">
    <location>
        <begin position="1"/>
        <end position="834"/>
    </location>
</feature>
<feature type="domain" description="RRM 1" evidence="2">
    <location>
        <begin position="154"/>
        <end position="229"/>
    </location>
</feature>
<feature type="domain" description="RRM 2" evidence="2">
    <location>
        <begin position="283"/>
        <end position="359"/>
    </location>
</feature>
<feature type="domain" description="RRM 3" evidence="2">
    <location>
        <begin position="401"/>
        <end position="478"/>
    </location>
</feature>
<feature type="domain" description="RRM 4" evidence="2">
    <location>
        <begin position="758"/>
        <end position="834"/>
    </location>
</feature>
<feature type="region of interest" description="Disordered" evidence="3">
    <location>
        <begin position="237"/>
        <end position="277"/>
    </location>
</feature>
<feature type="region of interest" description="Disordered" evidence="3">
    <location>
        <begin position="546"/>
        <end position="572"/>
    </location>
</feature>
<feature type="region of interest" description="Disordered" evidence="3">
    <location>
        <begin position="621"/>
        <end position="643"/>
    </location>
</feature>
<feature type="compositionally biased region" description="Basic and acidic residues" evidence="3">
    <location>
        <begin position="244"/>
        <end position="255"/>
    </location>
</feature>
<feature type="compositionally biased region" description="Basic residues" evidence="3">
    <location>
        <begin position="259"/>
        <end position="277"/>
    </location>
</feature>
<feature type="compositionally biased region" description="Basic and acidic residues" evidence="3">
    <location>
        <begin position="550"/>
        <end position="572"/>
    </location>
</feature>
<feature type="modified residue" description="Phosphoserine" evidence="1">
    <location>
        <position position="701"/>
    </location>
</feature>
<feature type="splice variant" id="VSP_022525" description="In isoform 2." evidence="4">
    <location>
        <begin position="1"/>
        <end position="216"/>
    </location>
</feature>
<feature type="sequence conflict" description="In Ref. 3; AAH80741." evidence="5" ref="3">
    <original>E</original>
    <variation>D</variation>
    <location>
        <position position="167"/>
    </location>
</feature>
<feature type="sequence conflict" description="In Ref. 1; BAE41443." evidence="5" ref="1">
    <original>Y</original>
    <variation>H</variation>
    <location>
        <position position="432"/>
    </location>
</feature>
<reference key="1">
    <citation type="journal article" date="2005" name="Science">
        <title>The transcriptional landscape of the mammalian genome.</title>
        <authorList>
            <person name="Carninci P."/>
            <person name="Kasukawa T."/>
            <person name="Katayama S."/>
            <person name="Gough J."/>
            <person name="Frith M.C."/>
            <person name="Maeda N."/>
            <person name="Oyama R."/>
            <person name="Ravasi T."/>
            <person name="Lenhard B."/>
            <person name="Wells C."/>
            <person name="Kodzius R."/>
            <person name="Shimokawa K."/>
            <person name="Bajic V.B."/>
            <person name="Brenner S.E."/>
            <person name="Batalov S."/>
            <person name="Forrest A.R."/>
            <person name="Zavolan M."/>
            <person name="Davis M.J."/>
            <person name="Wilming L.G."/>
            <person name="Aidinis V."/>
            <person name="Allen J.E."/>
            <person name="Ambesi-Impiombato A."/>
            <person name="Apweiler R."/>
            <person name="Aturaliya R.N."/>
            <person name="Bailey T.L."/>
            <person name="Bansal M."/>
            <person name="Baxter L."/>
            <person name="Beisel K.W."/>
            <person name="Bersano T."/>
            <person name="Bono H."/>
            <person name="Chalk A.M."/>
            <person name="Chiu K.P."/>
            <person name="Choudhary V."/>
            <person name="Christoffels A."/>
            <person name="Clutterbuck D.R."/>
            <person name="Crowe M.L."/>
            <person name="Dalla E."/>
            <person name="Dalrymple B.P."/>
            <person name="de Bono B."/>
            <person name="Della Gatta G."/>
            <person name="di Bernardo D."/>
            <person name="Down T."/>
            <person name="Engstrom P."/>
            <person name="Fagiolini M."/>
            <person name="Faulkner G."/>
            <person name="Fletcher C.F."/>
            <person name="Fukushima T."/>
            <person name="Furuno M."/>
            <person name="Futaki S."/>
            <person name="Gariboldi M."/>
            <person name="Georgii-Hemming P."/>
            <person name="Gingeras T.R."/>
            <person name="Gojobori T."/>
            <person name="Green R.E."/>
            <person name="Gustincich S."/>
            <person name="Harbers M."/>
            <person name="Hayashi Y."/>
            <person name="Hensch T.K."/>
            <person name="Hirokawa N."/>
            <person name="Hill D."/>
            <person name="Huminiecki L."/>
            <person name="Iacono M."/>
            <person name="Ikeo K."/>
            <person name="Iwama A."/>
            <person name="Ishikawa T."/>
            <person name="Jakt M."/>
            <person name="Kanapin A."/>
            <person name="Katoh M."/>
            <person name="Kawasawa Y."/>
            <person name="Kelso J."/>
            <person name="Kitamura H."/>
            <person name="Kitano H."/>
            <person name="Kollias G."/>
            <person name="Krishnan S.P."/>
            <person name="Kruger A."/>
            <person name="Kummerfeld S.K."/>
            <person name="Kurochkin I.V."/>
            <person name="Lareau L.F."/>
            <person name="Lazarevic D."/>
            <person name="Lipovich L."/>
            <person name="Liu J."/>
            <person name="Liuni S."/>
            <person name="McWilliam S."/>
            <person name="Madan Babu M."/>
            <person name="Madera M."/>
            <person name="Marchionni L."/>
            <person name="Matsuda H."/>
            <person name="Matsuzawa S."/>
            <person name="Miki H."/>
            <person name="Mignone F."/>
            <person name="Miyake S."/>
            <person name="Morris K."/>
            <person name="Mottagui-Tabar S."/>
            <person name="Mulder N."/>
            <person name="Nakano N."/>
            <person name="Nakauchi H."/>
            <person name="Ng P."/>
            <person name="Nilsson R."/>
            <person name="Nishiguchi S."/>
            <person name="Nishikawa S."/>
            <person name="Nori F."/>
            <person name="Ohara O."/>
            <person name="Okazaki Y."/>
            <person name="Orlando V."/>
            <person name="Pang K.C."/>
            <person name="Pavan W.J."/>
            <person name="Pavesi G."/>
            <person name="Pesole G."/>
            <person name="Petrovsky N."/>
            <person name="Piazza S."/>
            <person name="Reed J."/>
            <person name="Reid J.F."/>
            <person name="Ring B.Z."/>
            <person name="Ringwald M."/>
            <person name="Rost B."/>
            <person name="Ruan Y."/>
            <person name="Salzberg S.L."/>
            <person name="Sandelin A."/>
            <person name="Schneider C."/>
            <person name="Schoenbach C."/>
            <person name="Sekiguchi K."/>
            <person name="Semple C.A."/>
            <person name="Seno S."/>
            <person name="Sessa L."/>
            <person name="Sheng Y."/>
            <person name="Shibata Y."/>
            <person name="Shimada H."/>
            <person name="Shimada K."/>
            <person name="Silva D."/>
            <person name="Sinclair B."/>
            <person name="Sperling S."/>
            <person name="Stupka E."/>
            <person name="Sugiura K."/>
            <person name="Sultana R."/>
            <person name="Takenaka Y."/>
            <person name="Taki K."/>
            <person name="Tammoja K."/>
            <person name="Tan S.L."/>
            <person name="Tang S."/>
            <person name="Taylor M.S."/>
            <person name="Tegner J."/>
            <person name="Teichmann S.A."/>
            <person name="Ueda H.R."/>
            <person name="van Nimwegen E."/>
            <person name="Verardo R."/>
            <person name="Wei C.L."/>
            <person name="Yagi K."/>
            <person name="Yamanishi H."/>
            <person name="Zabarovsky E."/>
            <person name="Zhu S."/>
            <person name="Zimmer A."/>
            <person name="Hide W."/>
            <person name="Bult C."/>
            <person name="Grimmond S.M."/>
            <person name="Teasdale R.D."/>
            <person name="Liu E.T."/>
            <person name="Brusic V."/>
            <person name="Quackenbush J."/>
            <person name="Wahlestedt C."/>
            <person name="Mattick J.S."/>
            <person name="Hume D.A."/>
            <person name="Kai C."/>
            <person name="Sasaki D."/>
            <person name="Tomaru Y."/>
            <person name="Fukuda S."/>
            <person name="Kanamori-Katayama M."/>
            <person name="Suzuki M."/>
            <person name="Aoki J."/>
            <person name="Arakawa T."/>
            <person name="Iida J."/>
            <person name="Imamura K."/>
            <person name="Itoh M."/>
            <person name="Kato T."/>
            <person name="Kawaji H."/>
            <person name="Kawagashira N."/>
            <person name="Kawashima T."/>
            <person name="Kojima M."/>
            <person name="Kondo S."/>
            <person name="Konno H."/>
            <person name="Nakano K."/>
            <person name="Ninomiya N."/>
            <person name="Nishio T."/>
            <person name="Okada M."/>
            <person name="Plessy C."/>
            <person name="Shibata K."/>
            <person name="Shiraki T."/>
            <person name="Suzuki S."/>
            <person name="Tagami M."/>
            <person name="Waki K."/>
            <person name="Watahiki A."/>
            <person name="Okamura-Oho Y."/>
            <person name="Suzuki H."/>
            <person name="Kawai J."/>
            <person name="Hayashizaki Y."/>
        </authorList>
    </citation>
    <scope>NUCLEOTIDE SEQUENCE [LARGE SCALE MRNA] (ISOFORMS 1 AND 2)</scope>
    <source>
        <strain>C57BL/6J</strain>
        <strain>NOD</strain>
        <tissue>Adipose tissue</tissue>
    </source>
</reference>
<reference key="2">
    <citation type="journal article" date="2009" name="PLoS Biol.">
        <title>Lineage-specific biology revealed by a finished genome assembly of the mouse.</title>
        <authorList>
            <person name="Church D.M."/>
            <person name="Goodstadt L."/>
            <person name="Hillier L.W."/>
            <person name="Zody M.C."/>
            <person name="Goldstein S."/>
            <person name="She X."/>
            <person name="Bult C.J."/>
            <person name="Agarwala R."/>
            <person name="Cherry J.L."/>
            <person name="DiCuccio M."/>
            <person name="Hlavina W."/>
            <person name="Kapustin Y."/>
            <person name="Meric P."/>
            <person name="Maglott D."/>
            <person name="Birtle Z."/>
            <person name="Marques A.C."/>
            <person name="Graves T."/>
            <person name="Zhou S."/>
            <person name="Teague B."/>
            <person name="Potamousis K."/>
            <person name="Churas C."/>
            <person name="Place M."/>
            <person name="Herschleb J."/>
            <person name="Runnheim R."/>
            <person name="Forrest D."/>
            <person name="Amos-Landgraf J."/>
            <person name="Schwartz D.C."/>
            <person name="Cheng Z."/>
            <person name="Lindblad-Toh K."/>
            <person name="Eichler E.E."/>
            <person name="Ponting C.P."/>
        </authorList>
    </citation>
    <scope>NUCLEOTIDE SEQUENCE [LARGE SCALE GENOMIC DNA]</scope>
    <source>
        <strain>C57BL/6J</strain>
    </source>
</reference>
<reference key="3">
    <citation type="journal article" date="2004" name="Genome Res.">
        <title>The status, quality, and expansion of the NIH full-length cDNA project: the Mammalian Gene Collection (MGC).</title>
        <authorList>
            <consortium name="The MGC Project Team"/>
        </authorList>
    </citation>
    <scope>NUCLEOTIDE SEQUENCE [LARGE SCALE MRNA] (ISOFORM 1)</scope>
    <source>
        <strain>C57BL/6J</strain>
        <strain>FVB/N</strain>
        <tissue>Embryonic germ cell</tissue>
        <tissue>Mammary tumor</tissue>
    </source>
</reference>
<comment type="alternative products">
    <event type="alternative splicing"/>
    <isoform>
        <id>Q66JV4-1</id>
        <name>1</name>
        <sequence type="displayed"/>
    </isoform>
    <isoform>
        <id>Q66JV4-2</id>
        <name>2</name>
        <sequence type="described" ref="VSP_022525"/>
    </isoform>
</comment>
<comment type="sequence caution" evidence="5">
    <conflict type="erroneous initiation">
        <sequence resource="EMBL-CDS" id="AAH30408"/>
    </conflict>
    <text>Extended N-terminus.</text>
</comment>
<sequence length="834" mass="96450">MAVVIRLLGLPFIAGPVDIRHFFKGLTIPDGGVHIIGGKVGEAFIIFATDEDARRAISRSGGFIKDSSVELFLSSKVEMQKTIEMKRTARVGRGRPGSGASGVGNVYHFSDALKEEESYSGYGSSVNRDAGFHTNGTGLDLRPRKTRPLKAENPYLFLRGLPYLVNEDDVRVFFSGLCVDGVILLKHHDGRNNGDAIVKFASCVDASGGLKCHRSFMGSRFIEVMQGSEQQWIEFGGTATEGGDTPRMRSEEHSPSRRINGRHFRKRSHSKSPRARSRSPLGFYVHLKNLSLNTNKRDLRNLFRDTDLTNDQIKFVYKDERRTRYAFVMFKNQKDYNTALGLHKTVLQYRPVLIDPVSRKEMVRIIECYEKKRPESLEKERPGRVSQKYSQEGFSGSGQKLCIYIRNLPFDVTKGEVQKFFADFSLVEDDIYLLCDDKGVGLGEALVRFKSEEQAMKAERLNRQRFLGIEVLLRLISEEQMQEFGIKSSWLSNERTQACSRSHDGDDCSCLFDLKDPSSCSFGQSESLRYHPKDLRKMGHFKHPQGYFRQSDRCSPEDFRHSPEDYRHPWEEHTSHSREEDWRLPLEDWPQEDDFRQCHEKDHRQLRSPWEEDFRRPSQEHFRRSYQEHIRRPPQEHFRRSREEDFRHVADEDFRQASDEDFRISQEDLRYPTDEDFRRVSVEDLREVPEKDLRLPKNFRSSGEEFWTPPDFRGQHPFVNFDHLQGGKFDFEKYKLENFHDGKFVPDLKFNCGSGGIIRVMISNLPFKANANEILDFFHGYKVIPDSVSIQYNEEGLPLGEAIVSMTNYNEALSAVKDLSGRPVGPRKVKLSLL</sequence>
<name>R12BB_MOUSE</name>
<protein>
    <recommendedName>
        <fullName>RNA-binding protein 12B-B</fullName>
    </recommendedName>
    <alternativeName>
        <fullName>RNA-binding motif protein 12B-B</fullName>
    </alternativeName>
</protein>
<evidence type="ECO:0000250" key="1">
    <source>
        <dbReference type="UniProtKB" id="Q80YR9"/>
    </source>
</evidence>
<evidence type="ECO:0000255" key="2">
    <source>
        <dbReference type="PROSITE-ProRule" id="PRU00176"/>
    </source>
</evidence>
<evidence type="ECO:0000256" key="3">
    <source>
        <dbReference type="SAM" id="MobiDB-lite"/>
    </source>
</evidence>
<evidence type="ECO:0000303" key="4">
    <source>
    </source>
</evidence>
<evidence type="ECO:0000305" key="5"/>
<dbReference type="EMBL" id="AK080943">
    <property type="protein sequence ID" value="BAC38085.1"/>
    <property type="molecule type" value="mRNA"/>
</dbReference>
<dbReference type="EMBL" id="AK169895">
    <property type="protein sequence ID" value="BAE41443.1"/>
    <property type="molecule type" value="mRNA"/>
</dbReference>
<dbReference type="EMBL" id="AL772167">
    <property type="status" value="NOT_ANNOTATED_CDS"/>
    <property type="molecule type" value="Genomic_DNA"/>
</dbReference>
<dbReference type="EMBL" id="BC030408">
    <property type="protein sequence ID" value="AAH30408.1"/>
    <property type="status" value="ALT_INIT"/>
    <property type="molecule type" value="mRNA"/>
</dbReference>
<dbReference type="EMBL" id="BC080741">
    <property type="protein sequence ID" value="AAH80741.1"/>
    <property type="molecule type" value="mRNA"/>
</dbReference>
<dbReference type="CCDS" id="CCDS17975.1">
    <molecule id="Q66JV4-1"/>
</dbReference>
<dbReference type="RefSeq" id="NP_001343491.1">
    <molecule id="Q66JV4-1"/>
    <property type="nucleotide sequence ID" value="NM_001356562.1"/>
</dbReference>
<dbReference type="RefSeq" id="NP_001343492.1">
    <molecule id="Q66JV4-1"/>
    <property type="nucleotide sequence ID" value="NM_001356563.1"/>
</dbReference>
<dbReference type="RefSeq" id="NP_945195.1">
    <molecule id="Q66JV4-1"/>
    <property type="nucleotide sequence ID" value="NM_198957.2"/>
</dbReference>
<dbReference type="RefSeq" id="XP_011248435.1">
    <property type="nucleotide sequence ID" value="XM_011250133.1"/>
</dbReference>
<dbReference type="RefSeq" id="XP_017175942.1">
    <molecule id="Q66JV4-1"/>
    <property type="nucleotide sequence ID" value="XM_017320453.3"/>
</dbReference>
<dbReference type="RefSeq" id="XP_017175943.1">
    <property type="nucleotide sequence ID" value="XM_017320454.1"/>
</dbReference>
<dbReference type="RefSeq" id="XP_036020438.1">
    <molecule id="Q66JV4-1"/>
    <property type="nucleotide sequence ID" value="XM_036164545.1"/>
</dbReference>
<dbReference type="FunCoup" id="Q66JV4">
    <property type="interactions" value="3289"/>
</dbReference>
<dbReference type="STRING" id="10090.ENSMUSP00000066311"/>
<dbReference type="iPTMnet" id="Q66JV4"/>
<dbReference type="PhosphoSitePlus" id="Q66JV4"/>
<dbReference type="jPOST" id="Q66JV4"/>
<dbReference type="PaxDb" id="10090-ENSMUSP00000066311"/>
<dbReference type="PeptideAtlas" id="Q66JV4"/>
<dbReference type="ProteomicsDB" id="300300">
    <molecule id="Q66JV4-1"/>
</dbReference>
<dbReference type="ProteomicsDB" id="300301">
    <molecule id="Q66JV4-2"/>
</dbReference>
<dbReference type="Ensembl" id="ENSMUST00000063839.6">
    <molecule id="Q66JV4-1"/>
    <property type="protein sequence ID" value="ENSMUSP00000066311.6"/>
    <property type="gene ID" value="ENSMUSG00000052137.12"/>
</dbReference>
<dbReference type="Ensembl" id="ENSMUST00000095143.9">
    <molecule id="Q66JV4-1"/>
    <property type="protein sequence ID" value="ENSMUSP00000092765.3"/>
    <property type="gene ID" value="ENSMUSG00000052137.12"/>
</dbReference>
<dbReference type="GeneID" id="77604"/>
<dbReference type="KEGG" id="mmu:77604"/>
<dbReference type="UCSC" id="uc008sak.1">
    <molecule id="Q66JV4-1"/>
    <property type="organism name" value="mouse"/>
</dbReference>
<dbReference type="AGR" id="MGI:1924854"/>
<dbReference type="CTD" id="77604"/>
<dbReference type="MGI" id="MGI:1924854">
    <property type="gene designation" value="Rbm12b2"/>
</dbReference>
<dbReference type="VEuPathDB" id="HostDB:ENSMUSG00000052137"/>
<dbReference type="eggNOG" id="KOG4307">
    <property type="taxonomic scope" value="Eukaryota"/>
</dbReference>
<dbReference type="GeneTree" id="ENSGT00940000158322"/>
<dbReference type="HOGENOM" id="CLU_004368_1_0_1"/>
<dbReference type="InParanoid" id="Q66JV4"/>
<dbReference type="OMA" id="AEMQNML"/>
<dbReference type="OrthoDB" id="2588702at2759"/>
<dbReference type="PhylomeDB" id="Q66JV4"/>
<dbReference type="TreeFam" id="TF331899"/>
<dbReference type="BioGRID-ORCS" id="77604">
    <property type="hits" value="3 hits in 75 CRISPR screens"/>
</dbReference>
<dbReference type="PRO" id="PR:Q66JV4"/>
<dbReference type="Proteomes" id="UP000000589">
    <property type="component" value="Chromosome 4"/>
</dbReference>
<dbReference type="RNAct" id="Q66JV4">
    <property type="molecule type" value="protein"/>
</dbReference>
<dbReference type="Bgee" id="ENSMUSG00000052137">
    <property type="expression patterns" value="Expressed in manus and 202 other cell types or tissues"/>
</dbReference>
<dbReference type="GO" id="GO:0003723">
    <property type="term" value="F:RNA binding"/>
    <property type="evidence" value="ECO:0007669"/>
    <property type="project" value="UniProtKB-KW"/>
</dbReference>
<dbReference type="CDD" id="cd12746">
    <property type="entry name" value="RRM2_RBM12B"/>
    <property type="match status" value="1"/>
</dbReference>
<dbReference type="CDD" id="cd12748">
    <property type="entry name" value="RRM4_RBM12B"/>
    <property type="match status" value="1"/>
</dbReference>
<dbReference type="FunFam" id="3.30.70.330:FF:000193">
    <property type="entry name" value="RNA-binding motif protein 12"/>
    <property type="match status" value="1"/>
</dbReference>
<dbReference type="Gene3D" id="3.30.70.330">
    <property type="match status" value="5"/>
</dbReference>
<dbReference type="InterPro" id="IPR050666">
    <property type="entry name" value="ESRP"/>
</dbReference>
<dbReference type="InterPro" id="IPR012677">
    <property type="entry name" value="Nucleotide-bd_a/b_plait_sf"/>
</dbReference>
<dbReference type="InterPro" id="IPR035979">
    <property type="entry name" value="RBD_domain_sf"/>
</dbReference>
<dbReference type="InterPro" id="IPR034588">
    <property type="entry name" value="RBM12B_RRM2"/>
</dbReference>
<dbReference type="InterPro" id="IPR047188">
    <property type="entry name" value="RRM4_RBM12B"/>
</dbReference>
<dbReference type="InterPro" id="IPR000504">
    <property type="entry name" value="RRM_dom"/>
</dbReference>
<dbReference type="PANTHER" id="PTHR13976">
    <property type="entry name" value="HETEROGENEOUS NUCLEAR RIBONUCLEOPROTEIN-RELATED"/>
    <property type="match status" value="1"/>
</dbReference>
<dbReference type="Pfam" id="PF00076">
    <property type="entry name" value="RRM_1"/>
    <property type="match status" value="3"/>
</dbReference>
<dbReference type="SMART" id="SM00360">
    <property type="entry name" value="RRM"/>
    <property type="match status" value="5"/>
</dbReference>
<dbReference type="SUPFAM" id="SSF54928">
    <property type="entry name" value="RNA-binding domain, RBD"/>
    <property type="match status" value="4"/>
</dbReference>
<dbReference type="PROSITE" id="PS50102">
    <property type="entry name" value="RRM"/>
    <property type="match status" value="4"/>
</dbReference>